<proteinExistence type="evidence at protein level"/>
<gene>
    <name type="primary">TRK2</name>
    <name type="synonym">RPD2</name>
    <name type="ordered locus">YKR050W</name>
</gene>
<comment type="function">
    <text>This protein is required for low-affinity potassium transport.</text>
</comment>
<comment type="subcellular location">
    <subcellularLocation>
        <location>Membrane</location>
        <topology>Multi-pass membrane protein</topology>
    </subcellularLocation>
</comment>
<comment type="similarity">
    <text evidence="3">Belongs to the TrkH potassium transport family.</text>
</comment>
<organism>
    <name type="scientific">Saccharomyces cerevisiae (strain ATCC 204508 / S288c)</name>
    <name type="common">Baker's yeast</name>
    <dbReference type="NCBI Taxonomy" id="559292"/>
    <lineage>
        <taxon>Eukaryota</taxon>
        <taxon>Fungi</taxon>
        <taxon>Dikarya</taxon>
        <taxon>Ascomycota</taxon>
        <taxon>Saccharomycotina</taxon>
        <taxon>Saccharomycetes</taxon>
        <taxon>Saccharomycetales</taxon>
        <taxon>Saccharomycetaceae</taxon>
        <taxon>Saccharomyces</taxon>
    </lineage>
</organism>
<accession>P28584</accession>
<accession>D6VXB1</accession>
<name>TRK2_YEAST</name>
<reference key="1">
    <citation type="journal article" date="1991" name="Mol. Cell. Biol.">
        <title>TRK1 and TRK2 encode structurally related K+ transporters in Saccharomyces cerevisiae.</title>
        <authorList>
            <person name="Ko C.H."/>
            <person name="Gaber R.F."/>
        </authorList>
    </citation>
    <scope>NUCLEOTIDE SEQUENCE [GENOMIC DNA]</scope>
</reference>
<reference key="2">
    <citation type="journal article" date="1994" name="Nature">
        <title>Complete DNA sequence of yeast chromosome XI.</title>
        <authorList>
            <person name="Dujon B."/>
            <person name="Alexandraki D."/>
            <person name="Andre B."/>
            <person name="Ansorge W."/>
            <person name="Baladron V."/>
            <person name="Ballesta J.P.G."/>
            <person name="Banrevi A."/>
            <person name="Bolle P.-A."/>
            <person name="Bolotin-Fukuhara M."/>
            <person name="Bossier P."/>
            <person name="Bou G."/>
            <person name="Boyer J."/>
            <person name="Buitrago M.J."/>
            <person name="Cheret G."/>
            <person name="Colleaux L."/>
            <person name="Daignan-Fornier B."/>
            <person name="del Rey F."/>
            <person name="Dion C."/>
            <person name="Domdey H."/>
            <person name="Duesterhoeft A."/>
            <person name="Duesterhus S."/>
            <person name="Entian K.-D."/>
            <person name="Erfle H."/>
            <person name="Esteban P.F."/>
            <person name="Feldmann H."/>
            <person name="Fernandes L."/>
            <person name="Fobo G.M."/>
            <person name="Fritz C."/>
            <person name="Fukuhara H."/>
            <person name="Gabel C."/>
            <person name="Gaillon L."/>
            <person name="Garcia-Cantalejo J.M."/>
            <person name="Garcia-Ramirez J.J."/>
            <person name="Gent M.E."/>
            <person name="Ghazvini M."/>
            <person name="Goffeau A."/>
            <person name="Gonzalez A."/>
            <person name="Grothues D."/>
            <person name="Guerreiro P."/>
            <person name="Hegemann J.H."/>
            <person name="Hewitt N."/>
            <person name="Hilger F."/>
            <person name="Hollenberg C.P."/>
            <person name="Horaitis O."/>
            <person name="Indge K.J."/>
            <person name="Jacquier A."/>
            <person name="James C.M."/>
            <person name="Jauniaux J.-C."/>
            <person name="Jimenez A."/>
            <person name="Keuchel H."/>
            <person name="Kirchrath L."/>
            <person name="Kleine K."/>
            <person name="Koetter P."/>
            <person name="Legrain P."/>
            <person name="Liebl S."/>
            <person name="Louis E.J."/>
            <person name="Maia e Silva A."/>
            <person name="Marck C."/>
            <person name="Monnier A.-L."/>
            <person name="Moestl D."/>
            <person name="Mueller S."/>
            <person name="Obermaier B."/>
            <person name="Oliver S.G."/>
            <person name="Pallier C."/>
            <person name="Pascolo S."/>
            <person name="Pfeiffer F."/>
            <person name="Philippsen P."/>
            <person name="Planta R.J."/>
            <person name="Pohl F.M."/>
            <person name="Pohl T.M."/>
            <person name="Poehlmann R."/>
            <person name="Portetelle D."/>
            <person name="Purnelle B."/>
            <person name="Puzos V."/>
            <person name="Ramezani Rad M."/>
            <person name="Rasmussen S.W."/>
            <person name="Remacha M.A."/>
            <person name="Revuelta J.L."/>
            <person name="Richard G.-F."/>
            <person name="Rieger M."/>
            <person name="Rodrigues-Pousada C."/>
            <person name="Rose M."/>
            <person name="Rupp T."/>
            <person name="Santos M.A."/>
            <person name="Schwager C."/>
            <person name="Sensen C."/>
            <person name="Skala J."/>
            <person name="Soares H."/>
            <person name="Sor F."/>
            <person name="Stegemann J."/>
            <person name="Tettelin H."/>
            <person name="Thierry A."/>
            <person name="Tzermia M."/>
            <person name="Urrestarazu L.A."/>
            <person name="van Dyck L."/>
            <person name="van Vliet-Reedijk J.C."/>
            <person name="Valens M."/>
            <person name="Vandenbol M."/>
            <person name="Vilela C."/>
            <person name="Vissers S."/>
            <person name="von Wettstein D."/>
            <person name="Voss H."/>
            <person name="Wiemann S."/>
            <person name="Xu G."/>
            <person name="Zimmermann J."/>
            <person name="Haasemann M."/>
            <person name="Becker I."/>
            <person name="Mewes H.-W."/>
        </authorList>
    </citation>
    <scope>NUCLEOTIDE SEQUENCE [LARGE SCALE GENOMIC DNA]</scope>
    <source>
        <strain>ATCC 204508 / S288c</strain>
    </source>
</reference>
<reference key="3">
    <citation type="journal article" date="2014" name="G3 (Bethesda)">
        <title>The reference genome sequence of Saccharomyces cerevisiae: Then and now.</title>
        <authorList>
            <person name="Engel S.R."/>
            <person name="Dietrich F.S."/>
            <person name="Fisk D.G."/>
            <person name="Binkley G."/>
            <person name="Balakrishnan R."/>
            <person name="Costanzo M.C."/>
            <person name="Dwight S.S."/>
            <person name="Hitz B.C."/>
            <person name="Karra K."/>
            <person name="Nash R.S."/>
            <person name="Weng S."/>
            <person name="Wong E.D."/>
            <person name="Lloyd P."/>
            <person name="Skrzypek M.S."/>
            <person name="Miyasato S.R."/>
            <person name="Simison M."/>
            <person name="Cherry J.M."/>
        </authorList>
    </citation>
    <scope>GENOME REANNOTATION</scope>
    <source>
        <strain>ATCC 204508 / S288c</strain>
    </source>
</reference>
<reference key="4">
    <citation type="journal article" date="2006" name="Proc. Natl. Acad. Sci. U.S.A.">
        <title>A global topology map of the Saccharomyces cerevisiae membrane proteome.</title>
        <authorList>
            <person name="Kim H."/>
            <person name="Melen K."/>
            <person name="Oesterberg M."/>
            <person name="von Heijne G."/>
        </authorList>
    </citation>
    <scope>TOPOLOGY [LARGE SCALE ANALYSIS]</scope>
    <source>
        <strain>ATCC 208353 / W303-1A</strain>
    </source>
</reference>
<sequence>MPTAKRTSSRASLALPFQLRLVHKKSWGHRLRDFISGFLKSCRPIAKYVFPNFIVVHYIYLITLSIIGSILLYPCKNTAFIDVLFLAAGASTQGGLATKSTNDFNLYQQIVVYVITLLSTPILIHGFLAFVRLYWFERYFDNIRDISKQNFKLRRTMTLQQRELSGSSGNAARSRSFKDNLFRGKFVSREDPRQSASDVPMDSPDTSALSSISPLNVSSSKEESSDTQSSPPNFSSKRQPSDVDPRDIYKSIMMLQKQQEKSNANSTDSFSSETNGPAFIVQERHERRAPHCSLKRHSVLPSSQELNKLAQTKSFQKLLGLRRDEGDHDYFDGAPHKYMVTKKKKISRTQSCNIPTYTASPSPKTSGQVVENHRNLAKSAPSSFVDEEMSFSPQESLNLQFQAHPPKPKRREGDIGHPFTRTMSTNYLSWQPTFGRNSVFIGLTKQQKEELGGVEYRALRLLCCILMVYYIGFNILAFVTIVPWACTRHHYSEIIRRNGVSPTWWGFFTAMSAFSNLGLSLTADSMVSFDTAPYPLIFMMFFIIIGNTGFPIMLRFIIWIMFKTSRDLSQFKESLGFLLDHPRRCFTLLFPSGPTWWLFTTLVVLNATDWILFIILDFNSAVVRQVAKGYRALMGLFQSVCTRTAGFNVVDLSKLHPSIQVSYMLMMYVSVLPLAISIRRTNVYEEQSLGLYDSGQDDENITHEDDIKETDHDGESEERDTVSTKSKPKKQSPKSFVGAHLRRQLSFDLWYLFLGLFIICICEGRKIEDVNKPDFNVFAILFEVVSAYGTVGLSLGYPNTNTSLSAQFTVLSKLVIIAMLIRGRNRGLPYTLDRAIMLPSDKLEQIDRLQDMKAKGKLLAKVGEDPMTTYVKKRSHKLKKIATKFWGKH</sequence>
<feature type="chain" id="PRO_0000070464" description="Low-affinity potassium transport protein">
    <location>
        <begin position="1"/>
        <end position="889"/>
    </location>
</feature>
<feature type="topological domain" description="Cytoplasmic" evidence="1">
    <location>
        <begin position="1"/>
        <end position="51"/>
    </location>
</feature>
<feature type="transmembrane region" description="Helical" evidence="1">
    <location>
        <begin position="52"/>
        <end position="73"/>
    </location>
</feature>
<feature type="topological domain" description="Extracellular" evidence="1">
    <location>
        <begin position="74"/>
        <end position="80"/>
    </location>
</feature>
<feature type="transmembrane region" description="Helical" evidence="1">
    <location>
        <begin position="81"/>
        <end position="101"/>
    </location>
</feature>
<feature type="topological domain" description="Cytoplasmic" evidence="1">
    <location>
        <begin position="102"/>
        <end position="109"/>
    </location>
</feature>
<feature type="transmembrane region" description="Helical" evidence="1">
    <location>
        <begin position="110"/>
        <end position="130"/>
    </location>
</feature>
<feature type="topological domain" description="Extracellular" evidence="1">
    <location>
        <begin position="131"/>
        <end position="464"/>
    </location>
</feature>
<feature type="transmembrane region" description="Helical" evidence="1">
    <location>
        <begin position="465"/>
        <end position="487"/>
    </location>
</feature>
<feature type="topological domain" description="Cytoplasmic" evidence="1">
    <location>
        <begin position="488"/>
        <end position="499"/>
    </location>
</feature>
<feature type="transmembrane region" description="Helical" evidence="1">
    <location>
        <begin position="500"/>
        <end position="521"/>
    </location>
</feature>
<feature type="topological domain" description="Extracellular" evidence="1">
    <location>
        <begin position="522"/>
        <end position="524"/>
    </location>
</feature>
<feature type="transmembrane region" description="Helical" evidence="1">
    <location>
        <begin position="525"/>
        <end position="545"/>
    </location>
</feature>
<feature type="topological domain" description="Cytoplasmic" evidence="1">
    <location>
        <begin position="546"/>
        <end position="548"/>
    </location>
</feature>
<feature type="transmembrane region" description="Helical" evidence="1">
    <location>
        <begin position="549"/>
        <end position="569"/>
    </location>
</feature>
<feature type="topological domain" description="Extracellular" evidence="1">
    <location>
        <begin position="570"/>
        <end position="584"/>
    </location>
</feature>
<feature type="transmembrane region" description="Helical" evidence="1">
    <location>
        <begin position="585"/>
        <end position="605"/>
    </location>
</feature>
<feature type="topological domain" description="Cytoplasmic" evidence="1">
    <location>
        <begin position="606"/>
        <end position="609"/>
    </location>
</feature>
<feature type="transmembrane region" description="Helical" evidence="1">
    <location>
        <begin position="610"/>
        <end position="630"/>
    </location>
</feature>
<feature type="topological domain" description="Extracellular" evidence="1">
    <location>
        <begin position="631"/>
        <end position="657"/>
    </location>
</feature>
<feature type="transmembrane region" description="Helical" evidence="1">
    <location>
        <begin position="658"/>
        <end position="678"/>
    </location>
</feature>
<feature type="topological domain" description="Cytoplasmic" evidence="1">
    <location>
        <begin position="679"/>
        <end position="743"/>
    </location>
</feature>
<feature type="transmembrane region" description="Helical" evidence="1">
    <location>
        <begin position="744"/>
        <end position="764"/>
    </location>
</feature>
<feature type="topological domain" description="Extracellular" evidence="1">
    <location>
        <begin position="765"/>
        <end position="776"/>
    </location>
</feature>
<feature type="transmembrane region" description="Helical" evidence="1">
    <location>
        <begin position="777"/>
        <end position="797"/>
    </location>
</feature>
<feature type="topological domain" description="Cytoplasmic" evidence="1">
    <location>
        <begin position="798"/>
        <end position="889"/>
    </location>
</feature>
<feature type="region of interest" description="Disordered" evidence="2">
    <location>
        <begin position="189"/>
        <end position="244"/>
    </location>
</feature>
<feature type="region of interest" description="Disordered" evidence="2">
    <location>
        <begin position="705"/>
        <end position="733"/>
    </location>
</feature>
<feature type="compositionally biased region" description="Low complexity" evidence="2">
    <location>
        <begin position="207"/>
        <end position="219"/>
    </location>
</feature>
<feature type="glycosylation site" description="N-linked (GlcNAc...) asparagine" evidence="1">
    <location>
        <position position="216"/>
    </location>
</feature>
<feature type="glycosylation site" description="N-linked (GlcNAc...) asparagine" evidence="1">
    <location>
        <position position="233"/>
    </location>
</feature>
<feature type="glycosylation site" description="N-linked (GlcNAc...) asparagine" evidence="1">
    <location>
        <position position="265"/>
    </location>
</feature>
<protein>
    <recommendedName>
        <fullName>Low-affinity potassium transport protein</fullName>
    </recommendedName>
</protein>
<dbReference type="EMBL" id="M65215">
    <property type="protein sequence ID" value="AAA35172.1"/>
    <property type="molecule type" value="Genomic_DNA"/>
</dbReference>
<dbReference type="EMBL" id="Z28275">
    <property type="protein sequence ID" value="CAA82128.1"/>
    <property type="molecule type" value="Genomic_DNA"/>
</dbReference>
<dbReference type="EMBL" id="BK006944">
    <property type="protein sequence ID" value="DAA09201.1"/>
    <property type="molecule type" value="Genomic_DNA"/>
</dbReference>
<dbReference type="PIR" id="A41259">
    <property type="entry name" value="A41259"/>
</dbReference>
<dbReference type="RefSeq" id="NP_012976.1">
    <property type="nucleotide sequence ID" value="NM_001179840.1"/>
</dbReference>
<dbReference type="SMR" id="P28584"/>
<dbReference type="BioGRID" id="34181">
    <property type="interactions" value="89"/>
</dbReference>
<dbReference type="DIP" id="DIP-5225N"/>
<dbReference type="FunCoup" id="P28584">
    <property type="interactions" value="30"/>
</dbReference>
<dbReference type="IntAct" id="P28584">
    <property type="interactions" value="3"/>
</dbReference>
<dbReference type="MINT" id="P28584"/>
<dbReference type="STRING" id="4932.YKR050W"/>
<dbReference type="TCDB" id="2.A.38.2.3">
    <property type="family name" value="the k(+) transporter (trk) family"/>
</dbReference>
<dbReference type="GlyCosmos" id="P28584">
    <property type="glycosylation" value="3 sites, No reported glycans"/>
</dbReference>
<dbReference type="GlyGen" id="P28584">
    <property type="glycosylation" value="4 sites"/>
</dbReference>
<dbReference type="iPTMnet" id="P28584"/>
<dbReference type="PaxDb" id="4932-YKR050W"/>
<dbReference type="PeptideAtlas" id="P28584"/>
<dbReference type="EnsemblFungi" id="YKR050W_mRNA">
    <property type="protein sequence ID" value="YKR050W"/>
    <property type="gene ID" value="YKR050W"/>
</dbReference>
<dbReference type="GeneID" id="853924"/>
<dbReference type="KEGG" id="sce:YKR050W"/>
<dbReference type="AGR" id="SGD:S000001758"/>
<dbReference type="SGD" id="S000001758">
    <property type="gene designation" value="TRK2"/>
</dbReference>
<dbReference type="VEuPathDB" id="FungiDB:YKR050W"/>
<dbReference type="eggNOG" id="KOG1341">
    <property type="taxonomic scope" value="Eukaryota"/>
</dbReference>
<dbReference type="GeneTree" id="ENSGT00940000176441"/>
<dbReference type="HOGENOM" id="CLU_005947_0_1_1"/>
<dbReference type="InParanoid" id="P28584"/>
<dbReference type="OMA" id="MLRLMIW"/>
<dbReference type="OrthoDB" id="9999863at2759"/>
<dbReference type="BioCyc" id="MetaCyc:G3O-32020-MONOMER"/>
<dbReference type="BioCyc" id="YEAST:G3O-32020-MONOMER"/>
<dbReference type="BioGRID-ORCS" id="853924">
    <property type="hits" value="2 hits in 10 CRISPR screens"/>
</dbReference>
<dbReference type="PRO" id="PR:P28584"/>
<dbReference type="Proteomes" id="UP000002311">
    <property type="component" value="Chromosome XI"/>
</dbReference>
<dbReference type="RNAct" id="P28584">
    <property type="molecule type" value="protein"/>
</dbReference>
<dbReference type="GO" id="GO:0071944">
    <property type="term" value="C:cell periphery"/>
    <property type="evidence" value="ECO:0007005"/>
    <property type="project" value="SGD"/>
</dbReference>
<dbReference type="GO" id="GO:0005886">
    <property type="term" value="C:plasma membrane"/>
    <property type="evidence" value="ECO:0000314"/>
    <property type="project" value="SGD"/>
</dbReference>
<dbReference type="GO" id="GO:0140107">
    <property type="term" value="F:high-affinity potassium ion transmembrane transporter activity"/>
    <property type="evidence" value="ECO:0000318"/>
    <property type="project" value="GO_Central"/>
</dbReference>
<dbReference type="GO" id="GO:0015079">
    <property type="term" value="F:potassium ion transmembrane transporter activity"/>
    <property type="evidence" value="ECO:0000314"/>
    <property type="project" value="SGD"/>
</dbReference>
<dbReference type="GO" id="GO:0006874">
    <property type="term" value="P:intracellular calcium ion homeostasis"/>
    <property type="evidence" value="ECO:0000315"/>
    <property type="project" value="SGD"/>
</dbReference>
<dbReference type="GO" id="GO:0030007">
    <property type="term" value="P:intracellular potassium ion homeostasis"/>
    <property type="evidence" value="ECO:0000314"/>
    <property type="project" value="SGD"/>
</dbReference>
<dbReference type="GO" id="GO:1990573">
    <property type="term" value="P:potassium ion import across plasma membrane"/>
    <property type="evidence" value="ECO:0000318"/>
    <property type="project" value="GO_Central"/>
</dbReference>
<dbReference type="GO" id="GO:0042391">
    <property type="term" value="P:regulation of membrane potential"/>
    <property type="evidence" value="ECO:0000315"/>
    <property type="project" value="SGD"/>
</dbReference>
<dbReference type="InterPro" id="IPR003445">
    <property type="entry name" value="Cat_transpt"/>
</dbReference>
<dbReference type="InterPro" id="IPR004773">
    <property type="entry name" value="K/Na_transp_Trk1/HKT1"/>
</dbReference>
<dbReference type="InterPro" id="IPR015958">
    <property type="entry name" value="Trk1_fungi"/>
</dbReference>
<dbReference type="InterPro" id="IPR051143">
    <property type="entry name" value="TrkH_K-transport"/>
</dbReference>
<dbReference type="NCBIfam" id="TIGR00934">
    <property type="entry name" value="2a38euk"/>
    <property type="match status" value="1"/>
</dbReference>
<dbReference type="PANTHER" id="PTHR31064:SF30">
    <property type="entry name" value="HIGH-AFFINITY POTASSIUM TRANSPORT PROTEIN-RELATED"/>
    <property type="match status" value="1"/>
</dbReference>
<dbReference type="PANTHER" id="PTHR31064">
    <property type="entry name" value="POTASSIUM TRANSPORT PROTEIN DDB_G0292412-RELATED"/>
    <property type="match status" value="1"/>
</dbReference>
<dbReference type="Pfam" id="PF02386">
    <property type="entry name" value="TrkH"/>
    <property type="match status" value="1"/>
</dbReference>
<dbReference type="PIRSF" id="PIRSF002450">
    <property type="entry name" value="K+_transpter_TRK"/>
    <property type="match status" value="1"/>
</dbReference>
<keyword id="KW-0325">Glycoprotein</keyword>
<keyword id="KW-0406">Ion transport</keyword>
<keyword id="KW-0472">Membrane</keyword>
<keyword id="KW-0630">Potassium</keyword>
<keyword id="KW-0633">Potassium transport</keyword>
<keyword id="KW-1185">Reference proteome</keyword>
<keyword id="KW-0812">Transmembrane</keyword>
<keyword id="KW-1133">Transmembrane helix</keyword>
<keyword id="KW-0813">Transport</keyword>
<evidence type="ECO:0000255" key="1"/>
<evidence type="ECO:0000256" key="2">
    <source>
        <dbReference type="SAM" id="MobiDB-lite"/>
    </source>
</evidence>
<evidence type="ECO:0000305" key="3"/>